<gene>
    <name evidence="1" type="primary">argS</name>
    <name type="ordered locus">Swoo_4427</name>
</gene>
<keyword id="KW-0030">Aminoacyl-tRNA synthetase</keyword>
<keyword id="KW-0067">ATP-binding</keyword>
<keyword id="KW-0963">Cytoplasm</keyword>
<keyword id="KW-0436">Ligase</keyword>
<keyword id="KW-0547">Nucleotide-binding</keyword>
<keyword id="KW-0648">Protein biosynthesis</keyword>
<keyword id="KW-1185">Reference proteome</keyword>
<accession>B1KK48</accession>
<protein>
    <recommendedName>
        <fullName evidence="1">Arginine--tRNA ligase</fullName>
        <ecNumber evidence="1">6.1.1.19</ecNumber>
    </recommendedName>
    <alternativeName>
        <fullName evidence="1">Arginyl-tRNA synthetase</fullName>
        <shortName evidence="1">ArgRS</shortName>
    </alternativeName>
</protein>
<name>SYR_SHEWM</name>
<sequence>MKSHIESLLAQALDVLKQQEVIPTDFEARIQVDRTKDKTHGDFATNLAMMLTKIARKNPREIAQLIIDSLPEDAQVSKVEIAGPGFINFFIDDSALANQLMTALNDDRLGIALPQAQTVVVDYSSPNLAKEMHVGHLRSTIIGDSVVRALEFMGHKVIRQNHVGDWGTQFGMLLAYMEELRAQSGEQAQMELSDLETFYRAAKVRFDESEEFATRARKLVVALQSGDEYCNKLWREFNDISLSHCHEVYERLGVSLTRADVRGESAYNDDLAQVVRDLDSQGLLSESNGAKVVFQDEFKNKEGEPLPVIIQKADGGYLYATSDMAAMRYRANVLKADRALYFVDLRQALHFQQVFKLARKANFVDDNISLEHMGFGTMNGDDGRPFKTRSGGVVKLVDLLSEADTRALELVRSKNPDMDEAELAKIAKVVGISSVKYADLSKNRASDYIFSFEQMLSFEGNTAPYLLYAYTRVAGIFKRATDVDLSDAKIQLEHEKEKELGTKLAQFNEVLTRMVSKGQPHALCGYLFELAGAFSSFYEACPVLAADTEEQKKSRLLLAKLTAKTLKQGLGLLGIETLERM</sequence>
<reference key="1">
    <citation type="submission" date="2008-02" db="EMBL/GenBank/DDBJ databases">
        <title>Complete sequence of Shewanella woodyi ATCC 51908.</title>
        <authorList>
            <consortium name="US DOE Joint Genome Institute"/>
            <person name="Copeland A."/>
            <person name="Lucas S."/>
            <person name="Lapidus A."/>
            <person name="Glavina del Rio T."/>
            <person name="Dalin E."/>
            <person name="Tice H."/>
            <person name="Bruce D."/>
            <person name="Goodwin L."/>
            <person name="Pitluck S."/>
            <person name="Sims D."/>
            <person name="Brettin T."/>
            <person name="Detter J.C."/>
            <person name="Han C."/>
            <person name="Kuske C.R."/>
            <person name="Schmutz J."/>
            <person name="Larimer F."/>
            <person name="Land M."/>
            <person name="Hauser L."/>
            <person name="Kyrpides N."/>
            <person name="Lykidis A."/>
            <person name="Zhao J.-S."/>
            <person name="Richardson P."/>
        </authorList>
    </citation>
    <scope>NUCLEOTIDE SEQUENCE [LARGE SCALE GENOMIC DNA]</scope>
    <source>
        <strain>ATCC 51908 / MS32</strain>
    </source>
</reference>
<evidence type="ECO:0000255" key="1">
    <source>
        <dbReference type="HAMAP-Rule" id="MF_00123"/>
    </source>
</evidence>
<feature type="chain" id="PRO_1000095406" description="Arginine--tRNA ligase">
    <location>
        <begin position="1"/>
        <end position="581"/>
    </location>
</feature>
<feature type="short sequence motif" description="'HIGH' region">
    <location>
        <begin position="126"/>
        <end position="136"/>
    </location>
</feature>
<comment type="catalytic activity">
    <reaction evidence="1">
        <text>tRNA(Arg) + L-arginine + ATP = L-arginyl-tRNA(Arg) + AMP + diphosphate</text>
        <dbReference type="Rhea" id="RHEA:20301"/>
        <dbReference type="Rhea" id="RHEA-COMP:9658"/>
        <dbReference type="Rhea" id="RHEA-COMP:9673"/>
        <dbReference type="ChEBI" id="CHEBI:30616"/>
        <dbReference type="ChEBI" id="CHEBI:32682"/>
        <dbReference type="ChEBI" id="CHEBI:33019"/>
        <dbReference type="ChEBI" id="CHEBI:78442"/>
        <dbReference type="ChEBI" id="CHEBI:78513"/>
        <dbReference type="ChEBI" id="CHEBI:456215"/>
        <dbReference type="EC" id="6.1.1.19"/>
    </reaction>
</comment>
<comment type="subunit">
    <text evidence="1">Monomer.</text>
</comment>
<comment type="subcellular location">
    <subcellularLocation>
        <location evidence="1">Cytoplasm</location>
    </subcellularLocation>
</comment>
<comment type="similarity">
    <text evidence="1">Belongs to the class-I aminoacyl-tRNA synthetase family.</text>
</comment>
<proteinExistence type="inferred from homology"/>
<organism>
    <name type="scientific">Shewanella woodyi (strain ATCC 51908 / MS32)</name>
    <dbReference type="NCBI Taxonomy" id="392500"/>
    <lineage>
        <taxon>Bacteria</taxon>
        <taxon>Pseudomonadati</taxon>
        <taxon>Pseudomonadota</taxon>
        <taxon>Gammaproteobacteria</taxon>
        <taxon>Alteromonadales</taxon>
        <taxon>Shewanellaceae</taxon>
        <taxon>Shewanella</taxon>
    </lineage>
</organism>
<dbReference type="EC" id="6.1.1.19" evidence="1"/>
<dbReference type="EMBL" id="CP000961">
    <property type="protein sequence ID" value="ACA88679.1"/>
    <property type="molecule type" value="Genomic_DNA"/>
</dbReference>
<dbReference type="RefSeq" id="WP_012327005.1">
    <property type="nucleotide sequence ID" value="NC_010506.1"/>
</dbReference>
<dbReference type="SMR" id="B1KK48"/>
<dbReference type="STRING" id="392500.Swoo_4427"/>
<dbReference type="KEGG" id="swd:Swoo_4427"/>
<dbReference type="eggNOG" id="COG0018">
    <property type="taxonomic scope" value="Bacteria"/>
</dbReference>
<dbReference type="HOGENOM" id="CLU_006406_5_1_6"/>
<dbReference type="Proteomes" id="UP000002168">
    <property type="component" value="Chromosome"/>
</dbReference>
<dbReference type="GO" id="GO:0005737">
    <property type="term" value="C:cytoplasm"/>
    <property type="evidence" value="ECO:0007669"/>
    <property type="project" value="UniProtKB-SubCell"/>
</dbReference>
<dbReference type="GO" id="GO:0004814">
    <property type="term" value="F:arginine-tRNA ligase activity"/>
    <property type="evidence" value="ECO:0007669"/>
    <property type="project" value="UniProtKB-UniRule"/>
</dbReference>
<dbReference type="GO" id="GO:0005524">
    <property type="term" value="F:ATP binding"/>
    <property type="evidence" value="ECO:0007669"/>
    <property type="project" value="UniProtKB-UniRule"/>
</dbReference>
<dbReference type="GO" id="GO:0006420">
    <property type="term" value="P:arginyl-tRNA aminoacylation"/>
    <property type="evidence" value="ECO:0007669"/>
    <property type="project" value="UniProtKB-UniRule"/>
</dbReference>
<dbReference type="CDD" id="cd07956">
    <property type="entry name" value="Anticodon_Ia_Arg"/>
    <property type="match status" value="1"/>
</dbReference>
<dbReference type="CDD" id="cd00671">
    <property type="entry name" value="ArgRS_core"/>
    <property type="match status" value="1"/>
</dbReference>
<dbReference type="FunFam" id="1.10.730.10:FF:000008">
    <property type="entry name" value="Arginine--tRNA ligase"/>
    <property type="match status" value="1"/>
</dbReference>
<dbReference type="FunFam" id="3.30.1360.70:FF:000003">
    <property type="entry name" value="Arginine--tRNA ligase"/>
    <property type="match status" value="1"/>
</dbReference>
<dbReference type="FunFam" id="3.40.50.620:FF:000030">
    <property type="entry name" value="Arginine--tRNA ligase"/>
    <property type="match status" value="1"/>
</dbReference>
<dbReference type="Gene3D" id="3.30.1360.70">
    <property type="entry name" value="Arginyl tRNA synthetase N-terminal domain"/>
    <property type="match status" value="1"/>
</dbReference>
<dbReference type="Gene3D" id="3.40.50.620">
    <property type="entry name" value="HUPs"/>
    <property type="match status" value="1"/>
</dbReference>
<dbReference type="Gene3D" id="1.10.730.10">
    <property type="entry name" value="Isoleucyl-tRNA Synthetase, Domain 1"/>
    <property type="match status" value="1"/>
</dbReference>
<dbReference type="HAMAP" id="MF_00123">
    <property type="entry name" value="Arg_tRNA_synth"/>
    <property type="match status" value="1"/>
</dbReference>
<dbReference type="InterPro" id="IPR001412">
    <property type="entry name" value="aa-tRNA-synth_I_CS"/>
</dbReference>
<dbReference type="InterPro" id="IPR001278">
    <property type="entry name" value="Arg-tRNA-ligase"/>
</dbReference>
<dbReference type="InterPro" id="IPR005148">
    <property type="entry name" value="Arg-tRNA-synth_N"/>
</dbReference>
<dbReference type="InterPro" id="IPR036695">
    <property type="entry name" value="Arg-tRNA-synth_N_sf"/>
</dbReference>
<dbReference type="InterPro" id="IPR035684">
    <property type="entry name" value="ArgRS_core"/>
</dbReference>
<dbReference type="InterPro" id="IPR008909">
    <property type="entry name" value="DALR_anticod-bd"/>
</dbReference>
<dbReference type="InterPro" id="IPR014729">
    <property type="entry name" value="Rossmann-like_a/b/a_fold"/>
</dbReference>
<dbReference type="InterPro" id="IPR009080">
    <property type="entry name" value="tRNAsynth_Ia_anticodon-bd"/>
</dbReference>
<dbReference type="NCBIfam" id="TIGR00456">
    <property type="entry name" value="argS"/>
    <property type="match status" value="1"/>
</dbReference>
<dbReference type="PANTHER" id="PTHR11956:SF5">
    <property type="entry name" value="ARGININE--TRNA LIGASE, CYTOPLASMIC"/>
    <property type="match status" value="1"/>
</dbReference>
<dbReference type="PANTHER" id="PTHR11956">
    <property type="entry name" value="ARGINYL-TRNA SYNTHETASE"/>
    <property type="match status" value="1"/>
</dbReference>
<dbReference type="Pfam" id="PF03485">
    <property type="entry name" value="Arg_tRNA_synt_N"/>
    <property type="match status" value="1"/>
</dbReference>
<dbReference type="Pfam" id="PF05746">
    <property type="entry name" value="DALR_1"/>
    <property type="match status" value="1"/>
</dbReference>
<dbReference type="Pfam" id="PF00750">
    <property type="entry name" value="tRNA-synt_1d"/>
    <property type="match status" value="1"/>
</dbReference>
<dbReference type="PRINTS" id="PR01038">
    <property type="entry name" value="TRNASYNTHARG"/>
</dbReference>
<dbReference type="SMART" id="SM01016">
    <property type="entry name" value="Arg_tRNA_synt_N"/>
    <property type="match status" value="1"/>
</dbReference>
<dbReference type="SMART" id="SM00836">
    <property type="entry name" value="DALR_1"/>
    <property type="match status" value="1"/>
</dbReference>
<dbReference type="SUPFAM" id="SSF47323">
    <property type="entry name" value="Anticodon-binding domain of a subclass of class I aminoacyl-tRNA synthetases"/>
    <property type="match status" value="1"/>
</dbReference>
<dbReference type="SUPFAM" id="SSF55190">
    <property type="entry name" value="Arginyl-tRNA synthetase (ArgRS), N-terminal 'additional' domain"/>
    <property type="match status" value="1"/>
</dbReference>
<dbReference type="SUPFAM" id="SSF52374">
    <property type="entry name" value="Nucleotidylyl transferase"/>
    <property type="match status" value="1"/>
</dbReference>
<dbReference type="PROSITE" id="PS00178">
    <property type="entry name" value="AA_TRNA_LIGASE_I"/>
    <property type="match status" value="1"/>
</dbReference>